<keyword id="KW-0131">Cell cycle</keyword>
<keyword id="KW-0132">Cell division</keyword>
<keyword id="KW-0134">Cell wall</keyword>
<keyword id="KW-0325">Glycoprotein</keyword>
<keyword id="KW-0336">GPI-anchor</keyword>
<keyword id="KW-0449">Lipoprotein</keyword>
<keyword id="KW-0472">Membrane</keyword>
<keyword id="KW-0498">Mitosis</keyword>
<keyword id="KW-1185">Reference proteome</keyword>
<keyword id="KW-0677">Repeat</keyword>
<keyword id="KW-0964">Secreted</keyword>
<keyword id="KW-0732">Signal</keyword>
<comment type="function">
    <text evidence="5">Seems to be involved in the correct timing of cell separation after cytokinesis, as separation of mutant daughter cells is delayed. Could either be an enzyme necessary for glucans-degradation of the cell wall at the neck region between mother and daughter cells or a regulatory protein controlling this metabolic step.</text>
</comment>
<comment type="subcellular location">
    <subcellularLocation>
        <location evidence="7 8">Secreted</location>
        <location evidence="7 8">Cell wall</location>
    </subcellularLocation>
    <subcellularLocation>
        <location evidence="6">Membrane</location>
        <topology evidence="6">Lipid-anchor</topology>
        <topology evidence="6">GPI-anchor</topology>
    </subcellularLocation>
    <text>Localizes to the septum of dividing cells.</text>
</comment>
<comment type="induction">
    <text evidence="5">Exclusively expressed between the end of mitosis and early G1; inactivated before cells pass start.</text>
</comment>
<comment type="domain">
    <text>The number of the intragenic tandem repeats varies between different S.cerevisiae strains.</text>
</comment>
<comment type="PTM">
    <text evidence="1">The GPI-anchor is attached to the protein in the endoplasmic reticulum and serves to target the protein to the cell surface. There, the glucosamine-inositol phospholipid moiety is cleaved off and the GPI-modified mannoprotein is covalently attached via its lipidless GPI glycan remnant to the 1,6-beta-glucan of the outer cell wall layer (By similarity).</text>
</comment>
<reference key="1">
    <citation type="journal article" date="1996" name="Mol. Cell. Biol.">
        <title>EGT2 gene transcription is induced predominantly by Swi5 in early G1.</title>
        <authorList>
            <person name="Kovacech B."/>
            <person name="Nasmyth K."/>
            <person name="Schuster T."/>
        </authorList>
    </citation>
    <scope>NUCLEOTIDE SEQUENCE [GENOMIC DNA]</scope>
    <scope>INDUCTION</scope>
    <scope>FUNCTION</scope>
</reference>
<reference key="2">
    <citation type="journal article" date="1995" name="Yeast">
        <title>Sequencing analysis of a 15.4 kb fragment of yeast chromosome XIV identifies the RPD3, PAS8 and KRE1 loci, five new open reading frames.</title>
        <authorList>
            <person name="Maftahi M."/>
            <person name="Nicaud J.-M."/>
            <person name="Levesque H."/>
            <person name="Gaillardin C."/>
        </authorList>
    </citation>
    <scope>NUCLEOTIDE SEQUENCE [GENOMIC DNA]</scope>
    <source>
        <strain>S288c / FY1676</strain>
    </source>
</reference>
<reference key="3">
    <citation type="journal article" date="1997" name="Nature">
        <title>The nucleotide sequence of Saccharomyces cerevisiae chromosome XIV and its evolutionary implications.</title>
        <authorList>
            <person name="Philippsen P."/>
            <person name="Kleine K."/>
            <person name="Poehlmann R."/>
            <person name="Duesterhoeft A."/>
            <person name="Hamberg K."/>
            <person name="Hegemann J.H."/>
            <person name="Obermaier B."/>
            <person name="Urrestarazu L.A."/>
            <person name="Aert R."/>
            <person name="Albermann K."/>
            <person name="Altmann R."/>
            <person name="Andre B."/>
            <person name="Baladron V."/>
            <person name="Ballesta J.P.G."/>
            <person name="Becam A.-M."/>
            <person name="Beinhauer J.D."/>
            <person name="Boskovic J."/>
            <person name="Buitrago M.J."/>
            <person name="Bussereau F."/>
            <person name="Coster F."/>
            <person name="Crouzet M."/>
            <person name="D'Angelo M."/>
            <person name="Dal Pero F."/>
            <person name="De Antoni A."/>
            <person name="del Rey F."/>
            <person name="Doignon F."/>
            <person name="Domdey H."/>
            <person name="Dubois E."/>
            <person name="Fiedler T.A."/>
            <person name="Fleig U."/>
            <person name="Floeth M."/>
            <person name="Fritz C."/>
            <person name="Gaillardin C."/>
            <person name="Garcia-Cantalejo J.M."/>
            <person name="Glansdorff N."/>
            <person name="Goffeau A."/>
            <person name="Gueldener U."/>
            <person name="Herbert C.J."/>
            <person name="Heumann K."/>
            <person name="Heuss-Neitzel D."/>
            <person name="Hilbert H."/>
            <person name="Hinni K."/>
            <person name="Iraqui Houssaini I."/>
            <person name="Jacquet M."/>
            <person name="Jimenez A."/>
            <person name="Jonniaux J.-L."/>
            <person name="Karpfinger-Hartl L."/>
            <person name="Lanfranchi G."/>
            <person name="Lepingle A."/>
            <person name="Levesque H."/>
            <person name="Lyck R."/>
            <person name="Maftahi M."/>
            <person name="Mallet L."/>
            <person name="Maurer C.T.C."/>
            <person name="Messenguy F."/>
            <person name="Mewes H.-W."/>
            <person name="Moestl D."/>
            <person name="Nasr F."/>
            <person name="Nicaud J.-M."/>
            <person name="Niedenthal R.K."/>
            <person name="Pandolfo D."/>
            <person name="Pierard A."/>
            <person name="Piravandi E."/>
            <person name="Planta R.J."/>
            <person name="Pohl T.M."/>
            <person name="Purnelle B."/>
            <person name="Rebischung C."/>
            <person name="Remacha M.A."/>
            <person name="Revuelta J.L."/>
            <person name="Rinke M."/>
            <person name="Saiz J.E."/>
            <person name="Sartorello F."/>
            <person name="Scherens B."/>
            <person name="Sen-Gupta M."/>
            <person name="Soler-Mira A."/>
            <person name="Urbanus J.H.M."/>
            <person name="Valle G."/>
            <person name="Van Dyck L."/>
            <person name="Verhasselt P."/>
            <person name="Vierendeels F."/>
            <person name="Vissers S."/>
            <person name="Voet M."/>
            <person name="Volckaert G."/>
            <person name="Wach A."/>
            <person name="Wambutt R."/>
            <person name="Wedler H."/>
            <person name="Zollner A."/>
            <person name="Hani J."/>
        </authorList>
    </citation>
    <scope>NUCLEOTIDE SEQUENCE [LARGE SCALE GENOMIC DNA]</scope>
    <source>
        <strain>ATCC 204508 / S288c</strain>
    </source>
</reference>
<reference key="4">
    <citation type="journal article" date="2014" name="G3 (Bethesda)">
        <title>The reference genome sequence of Saccharomyces cerevisiae: Then and now.</title>
        <authorList>
            <person name="Engel S.R."/>
            <person name="Dietrich F.S."/>
            <person name="Fisk D.G."/>
            <person name="Binkley G."/>
            <person name="Balakrishnan R."/>
            <person name="Costanzo M.C."/>
            <person name="Dwight S.S."/>
            <person name="Hitz B.C."/>
            <person name="Karra K."/>
            <person name="Nash R.S."/>
            <person name="Weng S."/>
            <person name="Wong E.D."/>
            <person name="Lloyd P."/>
            <person name="Skrzypek M.S."/>
            <person name="Miyasato S.R."/>
            <person name="Simison M."/>
            <person name="Cherry J.M."/>
        </authorList>
    </citation>
    <scope>GENOME REANNOTATION</scope>
    <scope>SEQUENCE REVISION TO 577</scope>
    <source>
        <strain>ATCC 204508 / S288c</strain>
    </source>
</reference>
<reference key="5">
    <citation type="journal article" date="1998" name="Mol. Gen. Genet.">
        <title>Screening for glycosylphosphatidylinositol (GPI)-dependent cell wall proteins in Saccharomyces cerevisiae.</title>
        <authorList>
            <person name="Hamada K."/>
            <person name="Fukuchi S."/>
            <person name="Arisawa M."/>
            <person name="Baba M."/>
            <person name="Kitada K."/>
        </authorList>
    </citation>
    <scope>SUBCELLULAR LOCATION</scope>
</reference>
<reference key="6">
    <citation type="journal article" date="2004" name="J. Biol. Chem.">
        <title>GPI7 involved in glycosylphosphatidylinositol biosynthesis is essential for yeast cell separation.</title>
        <authorList>
            <person name="Fujita M."/>
            <person name="Yoko-o T."/>
            <person name="Okamoto M."/>
            <person name="Jigami Y."/>
        </authorList>
    </citation>
    <scope>SUBCELLULAR LOCATION</scope>
</reference>
<reference key="7">
    <citation type="journal article" date="2005" name="Nat. Genet.">
        <title>Intragenic tandem repeats generate functional variability.</title>
        <authorList>
            <person name="Verstrepen K.J."/>
            <person name="Jansen A."/>
            <person name="Lewitter F."/>
            <person name="Fink G.R."/>
        </authorList>
    </citation>
    <scope>REPEATS</scope>
</reference>
<evidence type="ECO:0000250" key="1"/>
<evidence type="ECO:0000255" key="2"/>
<evidence type="ECO:0000256" key="3">
    <source>
        <dbReference type="SAM" id="MobiDB-lite"/>
    </source>
</evidence>
<evidence type="ECO:0000269" key="4">
    <source>
    </source>
</evidence>
<evidence type="ECO:0000269" key="5">
    <source>
    </source>
</evidence>
<evidence type="ECO:0000305" key="6"/>
<evidence type="ECO:0000305" key="7">
    <source>
    </source>
</evidence>
<evidence type="ECO:0000305" key="8">
    <source>
    </source>
</evidence>
<organism>
    <name type="scientific">Saccharomyces cerevisiae (strain ATCC 204508 / S288c)</name>
    <name type="common">Baker's yeast</name>
    <dbReference type="NCBI Taxonomy" id="559292"/>
    <lineage>
        <taxon>Eukaryota</taxon>
        <taxon>Fungi</taxon>
        <taxon>Dikarya</taxon>
        <taxon>Ascomycota</taxon>
        <taxon>Saccharomycotina</taxon>
        <taxon>Saccharomycetes</taxon>
        <taxon>Saccharomycetales</taxon>
        <taxon>Saccharomycetaceae</taxon>
        <taxon>Saccharomyces</taxon>
    </lineage>
</organism>
<accession>P42835</accession>
<accession>D6W0M0</accession>
<name>EGT2_YEAST</name>
<feature type="signal peptide" evidence="2">
    <location>
        <begin position="1"/>
        <end position="20"/>
    </location>
</feature>
<feature type="chain" id="PRO_0000021159" description="Protein EGT2">
    <location>
        <begin position="21"/>
        <end position="1020"/>
    </location>
</feature>
<feature type="propeptide" id="PRO_0000372451" description="Removed in mature form" evidence="2">
    <location>
        <begin position="1021"/>
        <end position="1041"/>
    </location>
</feature>
<feature type="repeat" description="1" evidence="4">
    <location>
        <begin position="457"/>
        <end position="492"/>
    </location>
</feature>
<feature type="repeat" description="2" evidence="4">
    <location>
        <begin position="577"/>
        <end position="606"/>
    </location>
</feature>
<feature type="repeat" description="3" evidence="4">
    <location>
        <begin position="613"/>
        <end position="647"/>
    </location>
</feature>
<feature type="repeat" description="4" evidence="4">
    <location>
        <begin position="716"/>
        <end position="745"/>
    </location>
</feature>
<feature type="repeat" description="5" evidence="4">
    <location>
        <begin position="773"/>
        <end position="802"/>
    </location>
</feature>
<feature type="repeat" description="6" evidence="4">
    <location>
        <begin position="811"/>
        <end position="840"/>
    </location>
</feature>
<feature type="repeat" description="7" evidence="4">
    <location>
        <begin position="849"/>
        <end position="886"/>
    </location>
</feature>
<feature type="repeat" description="8" evidence="4">
    <location>
        <begin position="887"/>
        <end position="924"/>
    </location>
</feature>
<feature type="repeat" description="9" evidence="4">
    <location>
        <begin position="925"/>
        <end position="962"/>
    </location>
</feature>
<feature type="region of interest" description="Disordered" evidence="3">
    <location>
        <begin position="388"/>
        <end position="410"/>
    </location>
</feature>
<feature type="region of interest" description="9 X approximate repeats">
    <location>
        <begin position="457"/>
        <end position="962"/>
    </location>
</feature>
<feature type="lipid moiety-binding region" description="GPI-anchor amidated glycine" evidence="2">
    <location>
        <position position="1020"/>
    </location>
</feature>
<feature type="glycosylation site" description="N-linked (GlcNAc...) asparagine" evidence="2">
    <location>
        <position position="65"/>
    </location>
</feature>
<feature type="glycosylation site" description="N-linked (GlcNAc...) asparagine" evidence="2">
    <location>
        <position position="103"/>
    </location>
</feature>
<feature type="glycosylation site" description="N-linked (GlcNAc...) asparagine" evidence="2">
    <location>
        <position position="161"/>
    </location>
</feature>
<feature type="glycosylation site" description="N-linked (GlcNAc...) asparagine" evidence="2">
    <location>
        <position position="175"/>
    </location>
</feature>
<feature type="glycosylation site" description="N-linked (GlcNAc...) asparagine" evidence="2">
    <location>
        <position position="249"/>
    </location>
</feature>
<feature type="glycosylation site" description="N-linked (GlcNAc...) asparagine" evidence="2">
    <location>
        <position position="332"/>
    </location>
</feature>
<feature type="glycosylation site" description="N-linked (GlcNAc...) asparagine" evidence="2">
    <location>
        <position position="401"/>
    </location>
</feature>
<feature type="glycosylation site" description="N-linked (GlcNAc...) asparagine" evidence="2">
    <location>
        <position position="435"/>
    </location>
</feature>
<feature type="glycosylation site" description="N-linked (GlcNAc...) asparagine" evidence="2">
    <location>
        <position position="465"/>
    </location>
</feature>
<feature type="glycosylation site" description="N-linked (GlcNAc...) asparagine" evidence="2">
    <location>
        <position position="485"/>
    </location>
</feature>
<feature type="glycosylation site" description="N-linked (GlcNAc...) asparagine" evidence="2">
    <location>
        <position position="506"/>
    </location>
</feature>
<feature type="glycosylation site" description="N-linked (GlcNAc...) asparagine" evidence="2">
    <location>
        <position position="526"/>
    </location>
</feature>
<feature type="glycosylation site" description="N-linked (GlcNAc...) asparagine" evidence="2">
    <location>
        <position position="544"/>
    </location>
</feature>
<feature type="glycosylation site" description="N-linked (GlcNAc...) asparagine" evidence="2">
    <location>
        <position position="556"/>
    </location>
</feature>
<feature type="glycosylation site" description="N-linked (GlcNAc...) asparagine" evidence="2">
    <location>
        <position position="635"/>
    </location>
</feature>
<feature type="glycosylation site" description="N-linked (GlcNAc...) asparagine" evidence="2">
    <location>
        <position position="636"/>
    </location>
</feature>
<feature type="glycosylation site" description="N-linked (GlcNAc...) asparagine" evidence="2">
    <location>
        <position position="657"/>
    </location>
</feature>
<feature type="glycosylation site" description="N-linked (GlcNAc...) asparagine" evidence="2">
    <location>
        <position position="709"/>
    </location>
</feature>
<feature type="glycosylation site" description="N-linked (GlcNAc...) asparagine" evidence="2">
    <location>
        <position position="756"/>
    </location>
</feature>
<feature type="sequence conflict" description="In Ref. 1, 2; CAA96259 and 3; CAA86371." evidence="6" ref="1 2 3">
    <original>T</original>
    <variation>A</variation>
    <location>
        <position position="577"/>
    </location>
</feature>
<gene>
    <name type="primary">EGT2</name>
    <name type="ordered locus">YNL327W</name>
    <name type="ORF">N0320</name>
</gene>
<proteinExistence type="evidence at transcript level"/>
<sequence>MNKLLLHLVRVISILGLANALTQTQPILKDIQITDSYTKTKECTDPDHWFIIEGQLSIPKGSQQNITFQVPDAFSSFPQEPFSIKHNSNSVATISRPDKSTNNFTISIPEKSSEDITTTFNFLAQLTSDAKSKVTEPKSIVYSFYSENTMFNDVIDYVAKNTSAITTDGGIYKTNNTAWFTVDLPMRTFRNPVYLTSQTSSSSDYVFDTSLTKFEVVTAVDSFNEPINAIPYTTVHDYSTEDEIRCLFNSTISGGLYFRVTYFTKKLSTSSISNTVELTYPDEGTSVRLLGKRDTSTTLASELYSESAANIDSTTSDDTTSSDAAITPTYSNSTLSSYTSQSSAIPEVAVTASLSSGILSSTVDGASTSADASMSAVSTVSSSSEQASSSSISLSAPSSSNSTFTTPSSSLSATETYSIISSASISVTQASYIDNSTTTAVTQSTSTIAVSSAEKLSSTLSYTSNVTISVSSATQHTTTPSYVSNSTTLSSSSVLESVISSPYLANTTVSGASSASQSTNPPYVSNSTTSSATQLATIAPFAINITGTSISSSITNTSSVSSTTSSLSSGPFVSNTTVASGSYILTTTTESAQLTEIGSLIPISTITTSTTTSGTDKTGSNKVASSTEIAQSIVNNSSLSVSTINTNAATAAANARNATFTHATHSGSLQPSYHSSSLLSSTIDTKVTTATTSTSRDGSSSLAFTTGLNQSVVTGTDKSDTYSVISSTESAQVTEYDSLLPISTLKPTVVTGTSRNSTFSMVSSTKLTEATATDKGDAYSVISSTQSAQVTEYGSMLPISTLETPTVIMSTDESGYFTLTTCTESGQATEYGSLIPISTLDGSVIYTFTGESVVVGYSTTVGAAQYAQHTSLVPVSTIKGSKTSLSTEESVVAGYSTTVGAAQYAQHTSLVPVSTIKGSKTSLSTEESVVAGYSTTVDSAQYAEHTNLVAIDTLKTSTFQKATATEVCVTCTALSSPHSATLDAGTTISLPTSSSTSLSTIITWYSSSTIKPPSISTYSGAAGQLTIRIGSLLLGLISFLL</sequence>
<dbReference type="EMBL" id="Z46259">
    <property type="protein sequence ID" value="CAA86371.1"/>
    <property type="molecule type" value="Genomic_DNA"/>
</dbReference>
<dbReference type="EMBL" id="Z71603">
    <property type="protein sequence ID" value="CAA96259.1"/>
    <property type="molecule type" value="Genomic_DNA"/>
</dbReference>
<dbReference type="EMBL" id="BK006947">
    <property type="protein sequence ID" value="DAA10236.2"/>
    <property type="molecule type" value="Genomic_DNA"/>
</dbReference>
<dbReference type="PIR" id="S55862">
    <property type="entry name" value="S55862"/>
</dbReference>
<dbReference type="RefSeq" id="NP_014072.2">
    <property type="nucleotide sequence ID" value="NM_001183165.2"/>
</dbReference>
<dbReference type="SMR" id="P42835"/>
<dbReference type="BioGRID" id="35514">
    <property type="interactions" value="63"/>
</dbReference>
<dbReference type="DIP" id="DIP-4267N"/>
<dbReference type="FunCoup" id="P42835">
    <property type="interactions" value="64"/>
</dbReference>
<dbReference type="IntAct" id="P42835">
    <property type="interactions" value="6"/>
</dbReference>
<dbReference type="MINT" id="P42835"/>
<dbReference type="STRING" id="4932.YNL327W"/>
<dbReference type="GlyCosmos" id="P42835">
    <property type="glycosylation" value="19 sites, No reported glycans"/>
</dbReference>
<dbReference type="GlyGen" id="P42835">
    <property type="glycosylation" value="19 sites"/>
</dbReference>
<dbReference type="PaxDb" id="4932-YNL327W"/>
<dbReference type="PeptideAtlas" id="P42835"/>
<dbReference type="EnsemblFungi" id="YNL327W_mRNA">
    <property type="protein sequence ID" value="YNL327W"/>
    <property type="gene ID" value="YNL327W"/>
</dbReference>
<dbReference type="GeneID" id="855389"/>
<dbReference type="KEGG" id="sce:YNL327W"/>
<dbReference type="AGR" id="SGD:S000005271"/>
<dbReference type="SGD" id="S000005271">
    <property type="gene designation" value="EGT2"/>
</dbReference>
<dbReference type="VEuPathDB" id="FungiDB:YNL327W"/>
<dbReference type="eggNOG" id="ENOG502RXY0">
    <property type="taxonomic scope" value="Eukaryota"/>
</dbReference>
<dbReference type="HOGENOM" id="CLU_317886_0_0_1"/>
<dbReference type="InParanoid" id="P42835"/>
<dbReference type="OMA" id="QYAQHTS"/>
<dbReference type="OrthoDB" id="4060030at2759"/>
<dbReference type="BioCyc" id="YEAST:G3O-33311-MONOMER"/>
<dbReference type="BioGRID-ORCS" id="855389">
    <property type="hits" value="3 hits in 10 CRISPR screens"/>
</dbReference>
<dbReference type="PRO" id="PR:P42835"/>
<dbReference type="Proteomes" id="UP000002311">
    <property type="component" value="Chromosome XIV"/>
</dbReference>
<dbReference type="RNAct" id="P42835">
    <property type="molecule type" value="protein"/>
</dbReference>
<dbReference type="GO" id="GO:0030428">
    <property type="term" value="C:cell septum"/>
    <property type="evidence" value="ECO:0000314"/>
    <property type="project" value="SGD"/>
</dbReference>
<dbReference type="GO" id="GO:0005933">
    <property type="term" value="C:cellular bud"/>
    <property type="evidence" value="ECO:0000314"/>
    <property type="project" value="SGD"/>
</dbReference>
<dbReference type="GO" id="GO:0005621">
    <property type="term" value="C:cellular bud scar"/>
    <property type="evidence" value="ECO:0000314"/>
    <property type="project" value="SGD"/>
</dbReference>
<dbReference type="GO" id="GO:0005576">
    <property type="term" value="C:extracellular region"/>
    <property type="evidence" value="ECO:0007669"/>
    <property type="project" value="UniProtKB-KW"/>
</dbReference>
<dbReference type="GO" id="GO:0009277">
    <property type="term" value="C:fungal-type cell wall"/>
    <property type="evidence" value="ECO:0000314"/>
    <property type="project" value="SGD"/>
</dbReference>
<dbReference type="GO" id="GO:0000324">
    <property type="term" value="C:fungal-type vacuole"/>
    <property type="evidence" value="ECO:0007005"/>
    <property type="project" value="SGD"/>
</dbReference>
<dbReference type="GO" id="GO:0098552">
    <property type="term" value="C:side of membrane"/>
    <property type="evidence" value="ECO:0007669"/>
    <property type="project" value="UniProtKB-KW"/>
</dbReference>
<dbReference type="GO" id="GO:0008810">
    <property type="term" value="F:cellulase activity"/>
    <property type="evidence" value="ECO:0000304"/>
    <property type="project" value="SGD"/>
</dbReference>
<dbReference type="GO" id="GO:0000920">
    <property type="term" value="P:septum digestion after cytokinesis"/>
    <property type="evidence" value="ECO:0000315"/>
    <property type="project" value="SGD"/>
</dbReference>
<dbReference type="InterPro" id="IPR053273">
    <property type="entry name" value="CST_Regulator"/>
</dbReference>
<dbReference type="PANTHER" id="PTHR34659">
    <property type="entry name" value="BNAA05G11610D PROTEIN"/>
    <property type="match status" value="1"/>
</dbReference>
<dbReference type="PANTHER" id="PTHR34659:SF1">
    <property type="entry name" value="PROTEIN EGT2"/>
    <property type="match status" value="1"/>
</dbReference>
<protein>
    <recommendedName>
        <fullName>Protein EGT2</fullName>
    </recommendedName>
    <alternativeName>
        <fullName>Early G1 transcript 2</fullName>
    </alternativeName>
</protein>